<keyword id="KW-0325">Glycoprotein</keyword>
<keyword id="KW-0472">Membrane</keyword>
<keyword id="KW-1185">Reference proteome</keyword>
<keyword id="KW-0732">Signal</keyword>
<keyword id="KW-0812">Transmembrane</keyword>
<keyword id="KW-1133">Transmembrane helix</keyword>
<name>TGRI3_DICDI</name>
<proteinExistence type="inferred from homology"/>
<accession>Q54RE1</accession>
<reference key="1">
    <citation type="journal article" date="2005" name="Nature">
        <title>The genome of the social amoeba Dictyostelium discoideum.</title>
        <authorList>
            <person name="Eichinger L."/>
            <person name="Pachebat J.A."/>
            <person name="Gloeckner G."/>
            <person name="Rajandream M.A."/>
            <person name="Sucgang R."/>
            <person name="Berriman M."/>
            <person name="Song J."/>
            <person name="Olsen R."/>
            <person name="Szafranski K."/>
            <person name="Xu Q."/>
            <person name="Tunggal B."/>
            <person name="Kummerfeld S."/>
            <person name="Madera M."/>
            <person name="Konfortov B.A."/>
            <person name="Rivero F."/>
            <person name="Bankier A.T."/>
            <person name="Lehmann R."/>
            <person name="Hamlin N."/>
            <person name="Davies R."/>
            <person name="Gaudet P."/>
            <person name="Fey P."/>
            <person name="Pilcher K."/>
            <person name="Chen G."/>
            <person name="Saunders D."/>
            <person name="Sodergren E.J."/>
            <person name="Davis P."/>
            <person name="Kerhornou A."/>
            <person name="Nie X."/>
            <person name="Hall N."/>
            <person name="Anjard C."/>
            <person name="Hemphill L."/>
            <person name="Bason N."/>
            <person name="Farbrother P."/>
            <person name="Desany B."/>
            <person name="Just E."/>
            <person name="Morio T."/>
            <person name="Rost R."/>
            <person name="Churcher C.M."/>
            <person name="Cooper J."/>
            <person name="Haydock S."/>
            <person name="van Driessche N."/>
            <person name="Cronin A."/>
            <person name="Goodhead I."/>
            <person name="Muzny D.M."/>
            <person name="Mourier T."/>
            <person name="Pain A."/>
            <person name="Lu M."/>
            <person name="Harper D."/>
            <person name="Lindsay R."/>
            <person name="Hauser H."/>
            <person name="James K.D."/>
            <person name="Quiles M."/>
            <person name="Madan Babu M."/>
            <person name="Saito T."/>
            <person name="Buchrieser C."/>
            <person name="Wardroper A."/>
            <person name="Felder M."/>
            <person name="Thangavelu M."/>
            <person name="Johnson D."/>
            <person name="Knights A."/>
            <person name="Loulseged H."/>
            <person name="Mungall K.L."/>
            <person name="Oliver K."/>
            <person name="Price C."/>
            <person name="Quail M.A."/>
            <person name="Urushihara H."/>
            <person name="Hernandez J."/>
            <person name="Rabbinowitsch E."/>
            <person name="Steffen D."/>
            <person name="Sanders M."/>
            <person name="Ma J."/>
            <person name="Kohara Y."/>
            <person name="Sharp S."/>
            <person name="Simmonds M.N."/>
            <person name="Spiegler S."/>
            <person name="Tivey A."/>
            <person name="Sugano S."/>
            <person name="White B."/>
            <person name="Walker D."/>
            <person name="Woodward J.R."/>
            <person name="Winckler T."/>
            <person name="Tanaka Y."/>
            <person name="Shaulsky G."/>
            <person name="Schleicher M."/>
            <person name="Weinstock G.M."/>
            <person name="Rosenthal A."/>
            <person name="Cox E.C."/>
            <person name="Chisholm R.L."/>
            <person name="Gibbs R.A."/>
            <person name="Loomis W.F."/>
            <person name="Platzer M."/>
            <person name="Kay R.R."/>
            <person name="Williams J.G."/>
            <person name="Dear P.H."/>
            <person name="Noegel A.A."/>
            <person name="Barrell B.G."/>
            <person name="Kuspa A."/>
        </authorList>
    </citation>
    <scope>NUCLEOTIDE SEQUENCE [LARGE SCALE GENOMIC DNA]</scope>
    <source>
        <strain>AX4</strain>
    </source>
</reference>
<gene>
    <name type="primary">tgrI3</name>
    <name type="ORF">DDB_G0283249</name>
</gene>
<evidence type="ECO:0000255" key="1"/>
<dbReference type="EMBL" id="AAFI02000051">
    <property type="protein sequence ID" value="EAL65863.2"/>
    <property type="molecule type" value="Genomic_DNA"/>
</dbReference>
<dbReference type="RefSeq" id="XP_639204.2">
    <property type="nucleotide sequence ID" value="XM_634112.2"/>
</dbReference>
<dbReference type="FunCoup" id="Q54RE1">
    <property type="interactions" value="2"/>
</dbReference>
<dbReference type="GlyCosmos" id="Q54RE1">
    <property type="glycosylation" value="31 sites, No reported glycans"/>
</dbReference>
<dbReference type="GlyGen" id="Q54RE1">
    <property type="glycosylation" value="31 sites"/>
</dbReference>
<dbReference type="PaxDb" id="44689-DDB0304791"/>
<dbReference type="EnsemblProtists" id="EAL65863">
    <property type="protein sequence ID" value="EAL65863"/>
    <property type="gene ID" value="DDB_G0283249"/>
</dbReference>
<dbReference type="GeneID" id="8623978"/>
<dbReference type="KEGG" id="ddi:DDB_G0283249"/>
<dbReference type="dictyBase" id="DDB_G0283249">
    <property type="gene designation" value="tgrI3"/>
</dbReference>
<dbReference type="VEuPathDB" id="AmoebaDB:DDB_G0283249"/>
<dbReference type="HOGENOM" id="CLU_009950_0_0_1"/>
<dbReference type="InParanoid" id="Q54RE1"/>
<dbReference type="OMA" id="IWENHET"/>
<dbReference type="PhylomeDB" id="Q54RE1"/>
<dbReference type="PRO" id="PR:Q54RE1"/>
<dbReference type="Proteomes" id="UP000002195">
    <property type="component" value="Chromosome 4"/>
</dbReference>
<dbReference type="GO" id="GO:0009897">
    <property type="term" value="C:external side of plasma membrane"/>
    <property type="evidence" value="ECO:0000318"/>
    <property type="project" value="GO_Central"/>
</dbReference>
<dbReference type="GO" id="GO:0031152">
    <property type="term" value="P:aggregation involved in sorocarp development"/>
    <property type="evidence" value="ECO:0000318"/>
    <property type="project" value="GO_Central"/>
</dbReference>
<dbReference type="GO" id="GO:0098742">
    <property type="term" value="P:cell-cell adhesion via plasma-membrane adhesion molecules"/>
    <property type="evidence" value="ECO:0000318"/>
    <property type="project" value="GO_Central"/>
</dbReference>
<dbReference type="Gene3D" id="2.60.40.10">
    <property type="entry name" value="Immunoglobulins"/>
    <property type="match status" value="1"/>
</dbReference>
<dbReference type="InterPro" id="IPR052014">
    <property type="entry name" value="Dictyostelium_Tiger"/>
</dbReference>
<dbReference type="InterPro" id="IPR013783">
    <property type="entry name" value="Ig-like_fold"/>
</dbReference>
<dbReference type="InterPro" id="IPR014756">
    <property type="entry name" value="Ig_E-set"/>
</dbReference>
<dbReference type="InterPro" id="IPR002909">
    <property type="entry name" value="IPT_dom"/>
</dbReference>
<dbReference type="PANTHER" id="PTHR31341">
    <property type="entry name" value="IPT/TIG DOMAIN-CONTAINING PROTEIN-RELATED-RELATED"/>
    <property type="match status" value="1"/>
</dbReference>
<dbReference type="PANTHER" id="PTHR31341:SF4">
    <property type="entry name" value="IPT_TIG DOMAIN-CONTAINING PROTEIN-RELATED"/>
    <property type="match status" value="1"/>
</dbReference>
<dbReference type="Pfam" id="PF24612">
    <property type="entry name" value="Ig_TgrO1"/>
    <property type="match status" value="2"/>
</dbReference>
<dbReference type="Pfam" id="PF01833">
    <property type="entry name" value="TIG"/>
    <property type="match status" value="1"/>
</dbReference>
<dbReference type="SUPFAM" id="SSF81296">
    <property type="entry name" value="E set domains"/>
    <property type="match status" value="1"/>
</dbReference>
<comment type="subcellular location">
    <subcellularLocation>
        <location>Membrane</location>
        <topology>Single-pass type I membrane protein</topology>
    </subcellularLocation>
</comment>
<organism>
    <name type="scientific">Dictyostelium discoideum</name>
    <name type="common">Social amoeba</name>
    <dbReference type="NCBI Taxonomy" id="44689"/>
    <lineage>
        <taxon>Eukaryota</taxon>
        <taxon>Amoebozoa</taxon>
        <taxon>Evosea</taxon>
        <taxon>Eumycetozoa</taxon>
        <taxon>Dictyostelia</taxon>
        <taxon>Dictyosteliales</taxon>
        <taxon>Dictyosteliaceae</taxon>
        <taxon>Dictyostelium</taxon>
    </lineage>
</organism>
<protein>
    <recommendedName>
        <fullName>Tiger protein I3</fullName>
    </recommendedName>
    <alternativeName>
        <fullName>Transmembrane, IPT, Ig, E-set, Repeat protein I3</fullName>
    </alternativeName>
</protein>
<feature type="signal peptide" evidence="1">
    <location>
        <begin position="1"/>
        <end position="18"/>
    </location>
</feature>
<feature type="chain" id="PRO_0000384055" description="Tiger protein I3">
    <location>
        <begin position="19"/>
        <end position="852"/>
    </location>
</feature>
<feature type="topological domain" description="Extracellular" evidence="1">
    <location>
        <begin position="19"/>
        <end position="830"/>
    </location>
</feature>
<feature type="transmembrane region" description="Helical" evidence="1">
    <location>
        <begin position="831"/>
        <end position="851"/>
    </location>
</feature>
<feature type="topological domain" description="Cytoplasmic" evidence="1">
    <location>
        <position position="852"/>
    </location>
</feature>
<feature type="domain" description="IPT/TIG">
    <location>
        <begin position="290"/>
        <end position="367"/>
    </location>
</feature>
<feature type="glycosylation site" description="N-linked (GlcNAc...) asparagine" evidence="1">
    <location>
        <position position="31"/>
    </location>
</feature>
<feature type="glycosylation site" description="N-linked (GlcNAc...) asparagine" evidence="1">
    <location>
        <position position="47"/>
    </location>
</feature>
<feature type="glycosylation site" description="N-linked (GlcNAc...) asparagine" evidence="1">
    <location>
        <position position="67"/>
    </location>
</feature>
<feature type="glycosylation site" description="N-linked (GlcNAc...) asparagine" evidence="1">
    <location>
        <position position="97"/>
    </location>
</feature>
<feature type="glycosylation site" description="N-linked (GlcNAc...) asparagine" evidence="1">
    <location>
        <position position="129"/>
    </location>
</feature>
<feature type="glycosylation site" description="N-linked (GlcNAc...) asparagine" evidence="1">
    <location>
        <position position="201"/>
    </location>
</feature>
<feature type="glycosylation site" description="N-linked (GlcNAc...) asparagine" evidence="1">
    <location>
        <position position="215"/>
    </location>
</feature>
<feature type="glycosylation site" description="N-linked (GlcNAc...) asparagine" evidence="1">
    <location>
        <position position="228"/>
    </location>
</feature>
<feature type="glycosylation site" description="N-linked (GlcNAc...) asparagine" evidence="1">
    <location>
        <position position="260"/>
    </location>
</feature>
<feature type="glycosylation site" description="N-linked (GlcNAc...) asparagine" evidence="1">
    <location>
        <position position="323"/>
    </location>
</feature>
<feature type="glycosylation site" description="N-linked (GlcNAc...) asparagine" evidence="1">
    <location>
        <position position="352"/>
    </location>
</feature>
<feature type="glycosylation site" description="N-linked (GlcNAc...) asparagine" evidence="1">
    <location>
        <position position="356"/>
    </location>
</feature>
<feature type="glycosylation site" description="N-linked (GlcNAc...) asparagine" evidence="1">
    <location>
        <position position="404"/>
    </location>
</feature>
<feature type="glycosylation site" description="N-linked (GlcNAc...) asparagine" evidence="1">
    <location>
        <position position="441"/>
    </location>
</feature>
<feature type="glycosylation site" description="N-linked (GlcNAc...) asparagine" evidence="1">
    <location>
        <position position="476"/>
    </location>
</feature>
<feature type="glycosylation site" description="N-linked (GlcNAc...) asparagine" evidence="1">
    <location>
        <position position="483"/>
    </location>
</feature>
<feature type="glycosylation site" description="N-linked (GlcNAc...) asparagine" evidence="1">
    <location>
        <position position="501"/>
    </location>
</feature>
<feature type="glycosylation site" description="N-linked (GlcNAc...) asparagine" evidence="1">
    <location>
        <position position="512"/>
    </location>
</feature>
<feature type="glycosylation site" description="N-linked (GlcNAc...) asparagine" evidence="1">
    <location>
        <position position="574"/>
    </location>
</feature>
<feature type="glycosylation site" description="N-linked (GlcNAc...) asparagine" evidence="1">
    <location>
        <position position="592"/>
    </location>
</feature>
<feature type="glycosylation site" description="N-linked (GlcNAc...) asparagine" evidence="1">
    <location>
        <position position="635"/>
    </location>
</feature>
<feature type="glycosylation site" description="N-linked (GlcNAc...) asparagine" evidence="1">
    <location>
        <position position="658"/>
    </location>
</feature>
<feature type="glycosylation site" description="N-linked (GlcNAc...) asparagine" evidence="1">
    <location>
        <position position="661"/>
    </location>
</feature>
<feature type="glycosylation site" description="N-linked (GlcNAc...) asparagine" evidence="1">
    <location>
        <position position="679"/>
    </location>
</feature>
<feature type="glycosylation site" description="N-linked (GlcNAc...) asparagine" evidence="1">
    <location>
        <position position="680"/>
    </location>
</feature>
<feature type="glycosylation site" description="N-linked (GlcNAc...) asparagine" evidence="1">
    <location>
        <position position="723"/>
    </location>
</feature>
<feature type="glycosylation site" description="N-linked (GlcNAc...) asparagine" evidence="1">
    <location>
        <position position="757"/>
    </location>
</feature>
<feature type="glycosylation site" description="N-linked (GlcNAc...) asparagine" evidence="1">
    <location>
        <position position="761"/>
    </location>
</feature>
<feature type="glycosylation site" description="N-linked (GlcNAc...) asparagine" evidence="1">
    <location>
        <position position="773"/>
    </location>
</feature>
<feature type="glycosylation site" description="N-linked (GlcNAc...) asparagine" evidence="1">
    <location>
        <position position="785"/>
    </location>
</feature>
<feature type="glycosylation site" description="N-linked (GlcNAc...) asparagine" evidence="1">
    <location>
        <position position="800"/>
    </location>
</feature>
<sequence length="852" mass="96258">MKILLFFILFYLFSFSISYDEVIPLGYESHNDSLVIRYREIENYYTNISFLWKGKSRYDMSFNCVLNNTIRTCTLPVKESDHAQMYSEEISACTENNGTFKMCGYDLPLFYFPSPLLISEFKPKTRGGNTTLSGYYLELKERIYVQFENSYRKDQFFYSGYVYLIPGVFQSKTPDRINLILKVYPGCGYRTIIWENHETLNFTYQEPNIEKIDINQSFLDITGTNFYNQSIFVSVKIDNNIIDPNDIISVDFEIIKLKFNYSDPFSSKFNVQVGCCDYWSSQFQITYPPIPSIVNSIPKLKGGLLIINGNRLTSSPSSSNNNNISVTVGDSICSIVSSSSNEIKCNLQPLSNSTFNNSSPIAVSINDVVNTNTLLLIYDTPYITTFSQVNDEIHIIGGCFGNINSTQIHINDKQVFGQIKSINNDETDLILKIQNQIYNFNISIESNSIKSNGINVDVEMYARINEIPLVSNKLINFTLFYVNSSNINLIPTIKIINEKSNQTSKSISTNVNESVVSCSFLIENNCGIINYEIEIGNQIYQSSFSYESPLINKCNLNSNEIVTCIGKGFVNKYNETSIFISGQSIALSKEINNSIYESISFQMNDEYNILGELYLNVCGLLSNKVNINTFPIFKNVSIPNLFDTNGGNIIIIGKYLNNNTNFTIECNGEQIIEKECKLNNSSTSLECYIKLNGPNGKTCKLLFNNDNNIVSTFSFIYKSPSINQTSIINLKQGGILTIIGNDFYYPIDKVTIIGNGNGSGNSSLNCNEAKYINDTMITCFIQATNYTFNNIKNGEMIFINVSTNGKSGISKVFKYLTQSDDVHQYSDARNIFQNLLLSILIIIIISLFISNI</sequence>